<feature type="chain" id="PRO_0000354783" description="Catalase-peroxidase">
    <location>
        <begin position="1"/>
        <end position="726"/>
    </location>
</feature>
<feature type="region of interest" description="Disordered" evidence="2">
    <location>
        <begin position="1"/>
        <end position="33"/>
    </location>
</feature>
<feature type="active site" description="Proton acceptor" evidence="1">
    <location>
        <position position="106"/>
    </location>
</feature>
<feature type="binding site" description="axial binding residue" evidence="1">
    <location>
        <position position="267"/>
    </location>
    <ligand>
        <name>heme b</name>
        <dbReference type="ChEBI" id="CHEBI:60344"/>
    </ligand>
    <ligandPart>
        <name>Fe</name>
        <dbReference type="ChEBI" id="CHEBI:18248"/>
    </ligandPart>
</feature>
<feature type="site" description="Transition state stabilizer" evidence="1">
    <location>
        <position position="102"/>
    </location>
</feature>
<feature type="cross-link" description="Tryptophyl-tyrosyl-methioninium (Trp-Tyr) (with M-252)" evidence="1">
    <location>
        <begin position="105"/>
        <end position="226"/>
    </location>
</feature>
<feature type="cross-link" description="Tryptophyl-tyrosyl-methioninium (Tyr-Met) (with W-105)" evidence="1">
    <location>
        <begin position="226"/>
        <end position="252"/>
    </location>
</feature>
<accession>A1AIC1</accession>
<proteinExistence type="inferred from homology"/>
<organism>
    <name type="scientific">Escherichia coli O1:K1 / APEC</name>
    <dbReference type="NCBI Taxonomy" id="405955"/>
    <lineage>
        <taxon>Bacteria</taxon>
        <taxon>Pseudomonadati</taxon>
        <taxon>Pseudomonadota</taxon>
        <taxon>Gammaproteobacteria</taxon>
        <taxon>Enterobacterales</taxon>
        <taxon>Enterobacteriaceae</taxon>
        <taxon>Escherichia</taxon>
    </lineage>
</organism>
<name>KATG_ECOK1</name>
<sequence>MSTSDDIHNTTATGKCPFHQGGHDQSAGGGTTTRDWWPNQLRVDLLNQHSNRSNPLGEDFDYRKEFSKLDYYGLKKDLKALLTESQPWWPADWGSYAGLFIRMAWHGAGTYRSIDGRGGAGRGQQRFAPLNSWPDNVSLDKARRLLWPIKQKYGQKISWADLFILAGNVALENSGFRTFGFGAGREDVWEPDLDVNWGDEKAWLTHRHPEALAKAPLGATEMGLIYVNPEGPDHSGEPLSAAAAIRATFGNMGMNDEETVALIAGGHTLGKTHGAGPTSNVGPDPEAAPIEEQGLGWASTYGSGVGADAITSGLEVVWTQTPTQWSNYFFENLFKYEWVQTRSPAGAIQFEAVDAPEIIPDPFDPSKKRKPTMLVTDLTLRFDPEFEKISRRFLNDPQAFNEAFARAWFKLTHRDMGPKSRYIGPEVPKEDLIWQDPLPQPIYNPTEQDIIDLKFAIADSGLSVSELVSVAWASASTFRGGDKRGGANGARLALMPQRDWDVNAAAVRALPVLEKIQKESGKASLADIIVLAGVVGVEKAASAAGLSIHVPFAPGRVDARQDQTDIEMFELLEPIADGFRNYRARLDVSTTESLLIDKAQQLTLTAPEMTALVGGMRVLGANFDGSKNGVFTDRVGVLSNDFFVNLLDMRYEWKATDESKELFEGRDRETGEVKYTASRADLVFGSNSVLRAVAEVYASSDAHEKFVKDFVAAWVKVMNLDRFDLL</sequence>
<evidence type="ECO:0000255" key="1">
    <source>
        <dbReference type="HAMAP-Rule" id="MF_01961"/>
    </source>
</evidence>
<evidence type="ECO:0000256" key="2">
    <source>
        <dbReference type="SAM" id="MobiDB-lite"/>
    </source>
</evidence>
<protein>
    <recommendedName>
        <fullName evidence="1">Catalase-peroxidase</fullName>
        <shortName evidence="1">CP</shortName>
        <ecNumber evidence="1">1.11.1.21</ecNumber>
    </recommendedName>
    <alternativeName>
        <fullName evidence="1">Peroxidase/catalase</fullName>
    </alternativeName>
</protein>
<dbReference type="EC" id="1.11.1.21" evidence="1"/>
<dbReference type="EMBL" id="CP000468">
    <property type="protein sequence ID" value="ABJ03411.1"/>
    <property type="molecule type" value="Genomic_DNA"/>
</dbReference>
<dbReference type="RefSeq" id="WP_001296626.1">
    <property type="nucleotide sequence ID" value="NZ_CADILS010000014.1"/>
</dbReference>
<dbReference type="SMR" id="A1AIC1"/>
<dbReference type="KEGG" id="ecv:APECO1_2524"/>
<dbReference type="HOGENOM" id="CLU_025424_2_0_6"/>
<dbReference type="Proteomes" id="UP000008216">
    <property type="component" value="Chromosome"/>
</dbReference>
<dbReference type="GO" id="GO:0005829">
    <property type="term" value="C:cytosol"/>
    <property type="evidence" value="ECO:0007669"/>
    <property type="project" value="TreeGrafter"/>
</dbReference>
<dbReference type="GO" id="GO:0004096">
    <property type="term" value="F:catalase activity"/>
    <property type="evidence" value="ECO:0007669"/>
    <property type="project" value="UniProtKB-UniRule"/>
</dbReference>
<dbReference type="GO" id="GO:0020037">
    <property type="term" value="F:heme binding"/>
    <property type="evidence" value="ECO:0007669"/>
    <property type="project" value="InterPro"/>
</dbReference>
<dbReference type="GO" id="GO:0046872">
    <property type="term" value="F:metal ion binding"/>
    <property type="evidence" value="ECO:0007669"/>
    <property type="project" value="UniProtKB-KW"/>
</dbReference>
<dbReference type="GO" id="GO:0070301">
    <property type="term" value="P:cellular response to hydrogen peroxide"/>
    <property type="evidence" value="ECO:0007669"/>
    <property type="project" value="TreeGrafter"/>
</dbReference>
<dbReference type="GO" id="GO:0042744">
    <property type="term" value="P:hydrogen peroxide catabolic process"/>
    <property type="evidence" value="ECO:0007669"/>
    <property type="project" value="UniProtKB-KW"/>
</dbReference>
<dbReference type="CDD" id="cd08200">
    <property type="entry name" value="catalase_peroxidase_2"/>
    <property type="match status" value="1"/>
</dbReference>
<dbReference type="FunFam" id="1.10.420.10:FF:000002">
    <property type="entry name" value="Catalase-peroxidase"/>
    <property type="match status" value="1"/>
</dbReference>
<dbReference type="FunFam" id="1.10.420.10:FF:000004">
    <property type="entry name" value="Catalase-peroxidase"/>
    <property type="match status" value="1"/>
</dbReference>
<dbReference type="FunFam" id="1.10.520.10:FF:000002">
    <property type="entry name" value="Catalase-peroxidase"/>
    <property type="match status" value="1"/>
</dbReference>
<dbReference type="Gene3D" id="1.10.520.10">
    <property type="match status" value="2"/>
</dbReference>
<dbReference type="Gene3D" id="1.10.420.10">
    <property type="entry name" value="Peroxidase, domain 2"/>
    <property type="match status" value="2"/>
</dbReference>
<dbReference type="HAMAP" id="MF_01961">
    <property type="entry name" value="Catal_peroxid"/>
    <property type="match status" value="1"/>
</dbReference>
<dbReference type="InterPro" id="IPR000763">
    <property type="entry name" value="Catalase_peroxidase"/>
</dbReference>
<dbReference type="InterPro" id="IPR002016">
    <property type="entry name" value="Haem_peroxidase"/>
</dbReference>
<dbReference type="InterPro" id="IPR010255">
    <property type="entry name" value="Haem_peroxidase_sf"/>
</dbReference>
<dbReference type="InterPro" id="IPR019794">
    <property type="entry name" value="Peroxidases_AS"/>
</dbReference>
<dbReference type="InterPro" id="IPR019793">
    <property type="entry name" value="Peroxidases_heam-ligand_BS"/>
</dbReference>
<dbReference type="NCBIfam" id="TIGR00198">
    <property type="entry name" value="cat_per_HPI"/>
    <property type="match status" value="1"/>
</dbReference>
<dbReference type="NCBIfam" id="NF011635">
    <property type="entry name" value="PRK15061.1"/>
    <property type="match status" value="1"/>
</dbReference>
<dbReference type="PANTHER" id="PTHR30555:SF0">
    <property type="entry name" value="CATALASE-PEROXIDASE"/>
    <property type="match status" value="1"/>
</dbReference>
<dbReference type="PANTHER" id="PTHR30555">
    <property type="entry name" value="HYDROPEROXIDASE I, BIFUNCTIONAL CATALASE-PEROXIDASE"/>
    <property type="match status" value="1"/>
</dbReference>
<dbReference type="Pfam" id="PF00141">
    <property type="entry name" value="peroxidase"/>
    <property type="match status" value="2"/>
</dbReference>
<dbReference type="PRINTS" id="PR00460">
    <property type="entry name" value="BPEROXIDASE"/>
</dbReference>
<dbReference type="PRINTS" id="PR00458">
    <property type="entry name" value="PEROXIDASE"/>
</dbReference>
<dbReference type="SUPFAM" id="SSF48113">
    <property type="entry name" value="Heme-dependent peroxidases"/>
    <property type="match status" value="2"/>
</dbReference>
<dbReference type="PROSITE" id="PS00435">
    <property type="entry name" value="PEROXIDASE_1"/>
    <property type="match status" value="1"/>
</dbReference>
<dbReference type="PROSITE" id="PS00436">
    <property type="entry name" value="PEROXIDASE_2"/>
    <property type="match status" value="1"/>
</dbReference>
<dbReference type="PROSITE" id="PS50873">
    <property type="entry name" value="PEROXIDASE_4"/>
    <property type="match status" value="1"/>
</dbReference>
<gene>
    <name evidence="1" type="primary">katG</name>
    <name type="ordered locus">Ecok1_39170</name>
    <name type="ORF">APECO1_2524</name>
</gene>
<reference key="1">
    <citation type="journal article" date="2007" name="J. Bacteriol.">
        <title>The genome sequence of avian pathogenic Escherichia coli strain O1:K1:H7 shares strong similarities with human extraintestinal pathogenic E. coli genomes.</title>
        <authorList>
            <person name="Johnson T.J."/>
            <person name="Kariyawasam S."/>
            <person name="Wannemuehler Y."/>
            <person name="Mangiamele P."/>
            <person name="Johnson S.J."/>
            <person name="Doetkott C."/>
            <person name="Skyberg J.A."/>
            <person name="Lynne A.M."/>
            <person name="Johnson J.R."/>
            <person name="Nolan L.K."/>
        </authorList>
    </citation>
    <scope>NUCLEOTIDE SEQUENCE [LARGE SCALE GENOMIC DNA]</scope>
</reference>
<comment type="function">
    <text evidence="1">Bifunctional enzyme with both catalase and broad-spectrum peroxidase activity.</text>
</comment>
<comment type="catalytic activity">
    <reaction evidence="1">
        <text>H2O2 + AH2 = A + 2 H2O</text>
        <dbReference type="Rhea" id="RHEA:30275"/>
        <dbReference type="ChEBI" id="CHEBI:13193"/>
        <dbReference type="ChEBI" id="CHEBI:15377"/>
        <dbReference type="ChEBI" id="CHEBI:16240"/>
        <dbReference type="ChEBI" id="CHEBI:17499"/>
        <dbReference type="EC" id="1.11.1.21"/>
    </reaction>
</comment>
<comment type="catalytic activity">
    <reaction evidence="1">
        <text>2 H2O2 = O2 + 2 H2O</text>
        <dbReference type="Rhea" id="RHEA:20309"/>
        <dbReference type="ChEBI" id="CHEBI:15377"/>
        <dbReference type="ChEBI" id="CHEBI:15379"/>
        <dbReference type="ChEBI" id="CHEBI:16240"/>
        <dbReference type="EC" id="1.11.1.21"/>
    </reaction>
</comment>
<comment type="cofactor">
    <cofactor evidence="1">
        <name>heme b</name>
        <dbReference type="ChEBI" id="CHEBI:60344"/>
    </cofactor>
    <text evidence="1">Binds 1 heme b (iron(II)-protoporphyrin IX) group per dimer.</text>
</comment>
<comment type="subunit">
    <text evidence="1">Homodimer or homotetramer.</text>
</comment>
<comment type="PTM">
    <text evidence="1">Formation of the three residue Trp-Tyr-Met cross-link is important for the catalase, but not the peroxidase activity of the enzyme.</text>
</comment>
<comment type="similarity">
    <text evidence="1">Belongs to the peroxidase family. Peroxidase/catalase subfamily.</text>
</comment>
<keyword id="KW-0349">Heme</keyword>
<keyword id="KW-0376">Hydrogen peroxide</keyword>
<keyword id="KW-0408">Iron</keyword>
<keyword id="KW-0479">Metal-binding</keyword>
<keyword id="KW-0560">Oxidoreductase</keyword>
<keyword id="KW-0575">Peroxidase</keyword>
<keyword id="KW-1185">Reference proteome</keyword>